<gene>
    <name evidence="1" type="primary">argS</name>
    <name type="ordered locus">SPO2504</name>
</gene>
<feature type="chain" id="PRO_0000242093" description="Arginine--tRNA ligase">
    <location>
        <begin position="1"/>
        <end position="581"/>
    </location>
</feature>
<feature type="short sequence motif" description="'HIGH' region">
    <location>
        <begin position="131"/>
        <end position="141"/>
    </location>
</feature>
<sequence>MNLFTEMRGLVLEALEQMQAEGALPQGLDFANVAVEPPRDAAHGDMATNAAMVLAKPAGQKPRDIAETLAARLAADARVAKAEVAGPGFLNLTLAAPVWQRVVGTVLLDGTAYGRSDMGQGKKVNVEYVSANPTGPLHVGHTRGAVFGDALASLLDYAGYQVTREYYINDGGAQVDVLARSVYLRYLEAHGQAVEFVDGTYPGEYLVEVGQALKDKVGDAYVGQPEEVWLEAIRDFATDAMMELIRADLAQLGVKMDVFYSEKSLYGTGRIEAAIDSLRAKGLIYRGTLEPPKGKLPEDWEPREQTLFKSTEHGDDVDRPIMKSDGAWTYFAPDIAYHYDKVSRGFDALIDVFGADHGGYVKRMKAAVSALSDGRVPLDIKLCQLVKLWKNGEPFKMSKRAGNFVTLRDVVDQVGADVTRFVMLTRKNDAPLDFDFDKVLEQSRENPVFYVQYAHARVSSVLRRAAEAGIDTSDTALRAADLGLLGHEAELAVMRKLAEWPRLVEIAARTNEPHRIAFYLYELAGDFHALWNRGNDVSELRFIQDGDEGTSQAKIALARSVAVVISAGLAILGVTPAEEMR</sequence>
<comment type="catalytic activity">
    <reaction evidence="1">
        <text>tRNA(Arg) + L-arginine + ATP = L-arginyl-tRNA(Arg) + AMP + diphosphate</text>
        <dbReference type="Rhea" id="RHEA:20301"/>
        <dbReference type="Rhea" id="RHEA-COMP:9658"/>
        <dbReference type="Rhea" id="RHEA-COMP:9673"/>
        <dbReference type="ChEBI" id="CHEBI:30616"/>
        <dbReference type="ChEBI" id="CHEBI:32682"/>
        <dbReference type="ChEBI" id="CHEBI:33019"/>
        <dbReference type="ChEBI" id="CHEBI:78442"/>
        <dbReference type="ChEBI" id="CHEBI:78513"/>
        <dbReference type="ChEBI" id="CHEBI:456215"/>
        <dbReference type="EC" id="6.1.1.19"/>
    </reaction>
</comment>
<comment type="subunit">
    <text evidence="1">Monomer.</text>
</comment>
<comment type="subcellular location">
    <subcellularLocation>
        <location evidence="1">Cytoplasm</location>
    </subcellularLocation>
</comment>
<comment type="similarity">
    <text evidence="1">Belongs to the class-I aminoacyl-tRNA synthetase family.</text>
</comment>
<keyword id="KW-0030">Aminoacyl-tRNA synthetase</keyword>
<keyword id="KW-0067">ATP-binding</keyword>
<keyword id="KW-0963">Cytoplasm</keyword>
<keyword id="KW-0436">Ligase</keyword>
<keyword id="KW-0547">Nucleotide-binding</keyword>
<keyword id="KW-0648">Protein biosynthesis</keyword>
<keyword id="KW-1185">Reference proteome</keyword>
<accession>Q5LQI6</accession>
<name>SYR_RUEPO</name>
<protein>
    <recommendedName>
        <fullName evidence="1">Arginine--tRNA ligase</fullName>
        <ecNumber evidence="1">6.1.1.19</ecNumber>
    </recommendedName>
    <alternativeName>
        <fullName evidence="1">Arginyl-tRNA synthetase</fullName>
        <shortName evidence="1">ArgRS</shortName>
    </alternativeName>
</protein>
<reference key="1">
    <citation type="journal article" date="2004" name="Nature">
        <title>Genome sequence of Silicibacter pomeroyi reveals adaptations to the marine environment.</title>
        <authorList>
            <person name="Moran M.A."/>
            <person name="Buchan A."/>
            <person name="Gonzalez J.M."/>
            <person name="Heidelberg J.F."/>
            <person name="Whitman W.B."/>
            <person name="Kiene R.P."/>
            <person name="Henriksen J.R."/>
            <person name="King G.M."/>
            <person name="Belas R."/>
            <person name="Fuqua C."/>
            <person name="Brinkac L.M."/>
            <person name="Lewis M."/>
            <person name="Johri S."/>
            <person name="Weaver B."/>
            <person name="Pai G."/>
            <person name="Eisen J.A."/>
            <person name="Rahe E."/>
            <person name="Sheldon W.M."/>
            <person name="Ye W."/>
            <person name="Miller T.R."/>
            <person name="Carlton J."/>
            <person name="Rasko D.A."/>
            <person name="Paulsen I.T."/>
            <person name="Ren Q."/>
            <person name="Daugherty S.C."/>
            <person name="DeBoy R.T."/>
            <person name="Dodson R.J."/>
            <person name="Durkin A.S."/>
            <person name="Madupu R."/>
            <person name="Nelson W.C."/>
            <person name="Sullivan S.A."/>
            <person name="Rosovitz M.J."/>
            <person name="Haft D.H."/>
            <person name="Selengut J."/>
            <person name="Ward N."/>
        </authorList>
    </citation>
    <scope>NUCLEOTIDE SEQUENCE [LARGE SCALE GENOMIC DNA]</scope>
    <source>
        <strain>ATCC 700808 / DSM 15171 / DSS-3</strain>
    </source>
</reference>
<reference key="2">
    <citation type="journal article" date="2014" name="Stand. Genomic Sci.">
        <title>An updated genome annotation for the model marine bacterium Ruegeria pomeroyi DSS-3.</title>
        <authorList>
            <person name="Rivers A.R."/>
            <person name="Smith C.B."/>
            <person name="Moran M.A."/>
        </authorList>
    </citation>
    <scope>GENOME REANNOTATION</scope>
    <source>
        <strain>ATCC 700808 / DSM 15171 / DSS-3</strain>
    </source>
</reference>
<organism>
    <name type="scientific">Ruegeria pomeroyi (strain ATCC 700808 / DSM 15171 / DSS-3)</name>
    <name type="common">Silicibacter pomeroyi</name>
    <dbReference type="NCBI Taxonomy" id="246200"/>
    <lineage>
        <taxon>Bacteria</taxon>
        <taxon>Pseudomonadati</taxon>
        <taxon>Pseudomonadota</taxon>
        <taxon>Alphaproteobacteria</taxon>
        <taxon>Rhodobacterales</taxon>
        <taxon>Roseobacteraceae</taxon>
        <taxon>Ruegeria</taxon>
    </lineage>
</organism>
<evidence type="ECO:0000255" key="1">
    <source>
        <dbReference type="HAMAP-Rule" id="MF_00123"/>
    </source>
</evidence>
<dbReference type="EC" id="6.1.1.19" evidence="1"/>
<dbReference type="EMBL" id="CP000031">
    <property type="protein sequence ID" value="AAV95754.1"/>
    <property type="molecule type" value="Genomic_DNA"/>
</dbReference>
<dbReference type="RefSeq" id="WP_011048211.1">
    <property type="nucleotide sequence ID" value="NC_003911.12"/>
</dbReference>
<dbReference type="SMR" id="Q5LQI6"/>
<dbReference type="STRING" id="246200.SPO2504"/>
<dbReference type="PaxDb" id="246200-SPO2504"/>
<dbReference type="KEGG" id="sil:SPO2504"/>
<dbReference type="eggNOG" id="COG0018">
    <property type="taxonomic scope" value="Bacteria"/>
</dbReference>
<dbReference type="HOGENOM" id="CLU_006406_0_1_5"/>
<dbReference type="OrthoDB" id="9803211at2"/>
<dbReference type="Proteomes" id="UP000001023">
    <property type="component" value="Chromosome"/>
</dbReference>
<dbReference type="GO" id="GO:0005737">
    <property type="term" value="C:cytoplasm"/>
    <property type="evidence" value="ECO:0007669"/>
    <property type="project" value="UniProtKB-SubCell"/>
</dbReference>
<dbReference type="GO" id="GO:0004814">
    <property type="term" value="F:arginine-tRNA ligase activity"/>
    <property type="evidence" value="ECO:0007669"/>
    <property type="project" value="UniProtKB-UniRule"/>
</dbReference>
<dbReference type="GO" id="GO:0005524">
    <property type="term" value="F:ATP binding"/>
    <property type="evidence" value="ECO:0007669"/>
    <property type="project" value="UniProtKB-UniRule"/>
</dbReference>
<dbReference type="GO" id="GO:0006420">
    <property type="term" value="P:arginyl-tRNA aminoacylation"/>
    <property type="evidence" value="ECO:0007669"/>
    <property type="project" value="UniProtKB-UniRule"/>
</dbReference>
<dbReference type="CDD" id="cd00671">
    <property type="entry name" value="ArgRS_core"/>
    <property type="match status" value="1"/>
</dbReference>
<dbReference type="FunFam" id="3.30.1360.70:FF:000003">
    <property type="entry name" value="Arginine--tRNA ligase"/>
    <property type="match status" value="1"/>
</dbReference>
<dbReference type="FunFam" id="3.40.50.620:FF:000062">
    <property type="entry name" value="Arginine--tRNA ligase"/>
    <property type="match status" value="1"/>
</dbReference>
<dbReference type="Gene3D" id="3.30.1360.70">
    <property type="entry name" value="Arginyl tRNA synthetase N-terminal domain"/>
    <property type="match status" value="1"/>
</dbReference>
<dbReference type="Gene3D" id="3.40.50.620">
    <property type="entry name" value="HUPs"/>
    <property type="match status" value="1"/>
</dbReference>
<dbReference type="Gene3D" id="1.10.730.10">
    <property type="entry name" value="Isoleucyl-tRNA Synthetase, Domain 1"/>
    <property type="match status" value="1"/>
</dbReference>
<dbReference type="HAMAP" id="MF_00123">
    <property type="entry name" value="Arg_tRNA_synth"/>
    <property type="match status" value="1"/>
</dbReference>
<dbReference type="InterPro" id="IPR001412">
    <property type="entry name" value="aa-tRNA-synth_I_CS"/>
</dbReference>
<dbReference type="InterPro" id="IPR001278">
    <property type="entry name" value="Arg-tRNA-ligase"/>
</dbReference>
<dbReference type="InterPro" id="IPR005148">
    <property type="entry name" value="Arg-tRNA-synth_N"/>
</dbReference>
<dbReference type="InterPro" id="IPR036695">
    <property type="entry name" value="Arg-tRNA-synth_N_sf"/>
</dbReference>
<dbReference type="InterPro" id="IPR035684">
    <property type="entry name" value="ArgRS_core"/>
</dbReference>
<dbReference type="InterPro" id="IPR008909">
    <property type="entry name" value="DALR_anticod-bd"/>
</dbReference>
<dbReference type="InterPro" id="IPR014729">
    <property type="entry name" value="Rossmann-like_a/b/a_fold"/>
</dbReference>
<dbReference type="InterPro" id="IPR009080">
    <property type="entry name" value="tRNAsynth_Ia_anticodon-bd"/>
</dbReference>
<dbReference type="NCBIfam" id="TIGR00456">
    <property type="entry name" value="argS"/>
    <property type="match status" value="1"/>
</dbReference>
<dbReference type="PANTHER" id="PTHR11956:SF5">
    <property type="entry name" value="ARGININE--TRNA LIGASE, CYTOPLASMIC"/>
    <property type="match status" value="1"/>
</dbReference>
<dbReference type="PANTHER" id="PTHR11956">
    <property type="entry name" value="ARGINYL-TRNA SYNTHETASE"/>
    <property type="match status" value="1"/>
</dbReference>
<dbReference type="Pfam" id="PF03485">
    <property type="entry name" value="Arg_tRNA_synt_N"/>
    <property type="match status" value="1"/>
</dbReference>
<dbReference type="Pfam" id="PF05746">
    <property type="entry name" value="DALR_1"/>
    <property type="match status" value="1"/>
</dbReference>
<dbReference type="Pfam" id="PF00750">
    <property type="entry name" value="tRNA-synt_1d"/>
    <property type="match status" value="1"/>
</dbReference>
<dbReference type="PRINTS" id="PR01038">
    <property type="entry name" value="TRNASYNTHARG"/>
</dbReference>
<dbReference type="SMART" id="SM01016">
    <property type="entry name" value="Arg_tRNA_synt_N"/>
    <property type="match status" value="1"/>
</dbReference>
<dbReference type="SMART" id="SM00836">
    <property type="entry name" value="DALR_1"/>
    <property type="match status" value="1"/>
</dbReference>
<dbReference type="SUPFAM" id="SSF47323">
    <property type="entry name" value="Anticodon-binding domain of a subclass of class I aminoacyl-tRNA synthetases"/>
    <property type="match status" value="1"/>
</dbReference>
<dbReference type="SUPFAM" id="SSF55190">
    <property type="entry name" value="Arginyl-tRNA synthetase (ArgRS), N-terminal 'additional' domain"/>
    <property type="match status" value="1"/>
</dbReference>
<dbReference type="SUPFAM" id="SSF52374">
    <property type="entry name" value="Nucleotidylyl transferase"/>
    <property type="match status" value="1"/>
</dbReference>
<dbReference type="PROSITE" id="PS00178">
    <property type="entry name" value="AA_TRNA_LIGASE_I"/>
    <property type="match status" value="1"/>
</dbReference>
<proteinExistence type="inferred from homology"/>